<evidence type="ECO:0000255" key="1">
    <source>
        <dbReference type="HAMAP-Rule" id="MF_01350"/>
    </source>
</evidence>
<evidence type="ECO:0000305" key="2"/>
<feature type="chain" id="PRO_0000244967" description="NADH-quinone oxidoreductase subunit H">
    <location>
        <begin position="1"/>
        <end position="363"/>
    </location>
</feature>
<feature type="transmembrane region" description="Helical" evidence="1">
    <location>
        <begin position="29"/>
        <end position="49"/>
    </location>
</feature>
<feature type="transmembrane region" description="Helical" evidence="1">
    <location>
        <begin position="62"/>
        <end position="82"/>
    </location>
</feature>
<feature type="transmembrane region" description="Helical" evidence="1">
    <location>
        <begin position="94"/>
        <end position="114"/>
    </location>
</feature>
<feature type="transmembrane region" description="Helical" evidence="1">
    <location>
        <begin position="127"/>
        <end position="147"/>
    </location>
</feature>
<feature type="transmembrane region" description="Helical" evidence="1">
    <location>
        <begin position="166"/>
        <end position="186"/>
    </location>
</feature>
<feature type="transmembrane region" description="Helical" evidence="1">
    <location>
        <begin position="202"/>
        <end position="222"/>
    </location>
</feature>
<feature type="transmembrane region" description="Helical" evidence="1">
    <location>
        <begin position="239"/>
        <end position="257"/>
    </location>
</feature>
<feature type="transmembrane region" description="Helical" evidence="1">
    <location>
        <begin position="264"/>
        <end position="286"/>
    </location>
</feature>
<feature type="transmembrane region" description="Helical" evidence="1">
    <location>
        <begin position="293"/>
        <end position="313"/>
    </location>
</feature>
<feature type="transmembrane region" description="Helical" evidence="1">
    <location>
        <begin position="339"/>
        <end position="359"/>
    </location>
</feature>
<comment type="function">
    <text evidence="1">NDH-1 shuttles electrons from NADH, via FMN and iron-sulfur (Fe-S) centers, to quinones in the respiratory chain. The immediate electron acceptor for the enzyme in this species is believed to be ubiquinone. Couples the redox reaction to proton translocation (for every two electrons transferred, four hydrogen ions are translocated across the cytoplasmic membrane), and thus conserves the redox energy in a proton gradient. This subunit may bind ubiquinone.</text>
</comment>
<comment type="catalytic activity">
    <reaction evidence="1">
        <text>a quinone + NADH + 5 H(+)(in) = a quinol + NAD(+) + 4 H(+)(out)</text>
        <dbReference type="Rhea" id="RHEA:57888"/>
        <dbReference type="ChEBI" id="CHEBI:15378"/>
        <dbReference type="ChEBI" id="CHEBI:24646"/>
        <dbReference type="ChEBI" id="CHEBI:57540"/>
        <dbReference type="ChEBI" id="CHEBI:57945"/>
        <dbReference type="ChEBI" id="CHEBI:132124"/>
    </reaction>
</comment>
<comment type="subunit">
    <text evidence="1">NDH-1 is composed of 14 different subunits. Subunits NuoA, H, J, K, L, M, N constitute the membrane sector of the complex.</text>
</comment>
<comment type="subcellular location">
    <subcellularLocation>
        <location evidence="1">Cell inner membrane</location>
        <topology evidence="1">Multi-pass membrane protein</topology>
    </subcellularLocation>
</comment>
<comment type="similarity">
    <text evidence="1">Belongs to the complex I subunit 1 family.</text>
</comment>
<comment type="sequence caution" evidence="2">
    <conflict type="erroneous initiation">
        <sequence resource="EMBL-CDS" id="AAO28141"/>
    </conflict>
</comment>
<organism>
    <name type="scientific">Xylella fastidiosa (strain Temecula1 / ATCC 700964)</name>
    <dbReference type="NCBI Taxonomy" id="183190"/>
    <lineage>
        <taxon>Bacteria</taxon>
        <taxon>Pseudomonadati</taxon>
        <taxon>Pseudomonadota</taxon>
        <taxon>Gammaproteobacteria</taxon>
        <taxon>Lysobacterales</taxon>
        <taxon>Lysobacteraceae</taxon>
        <taxon>Xylella</taxon>
    </lineage>
</organism>
<accession>Q87EP8</accession>
<keyword id="KW-0997">Cell inner membrane</keyword>
<keyword id="KW-1003">Cell membrane</keyword>
<keyword id="KW-0472">Membrane</keyword>
<keyword id="KW-0520">NAD</keyword>
<keyword id="KW-0874">Quinone</keyword>
<keyword id="KW-1185">Reference proteome</keyword>
<keyword id="KW-1278">Translocase</keyword>
<keyword id="KW-0812">Transmembrane</keyword>
<keyword id="KW-1133">Transmembrane helix</keyword>
<keyword id="KW-0830">Ubiquinone</keyword>
<protein>
    <recommendedName>
        <fullName evidence="1">NADH-quinone oxidoreductase subunit H</fullName>
        <ecNumber evidence="1">7.1.1.-</ecNumber>
    </recommendedName>
    <alternativeName>
        <fullName evidence="1">NADH dehydrogenase I subunit H</fullName>
    </alternativeName>
    <alternativeName>
        <fullName evidence="1">NDH-1 subunit H</fullName>
    </alternativeName>
</protein>
<gene>
    <name evidence="1" type="primary">nuoH</name>
    <name type="synonym">nqo8</name>
    <name type="ordered locus">PD_0255</name>
</gene>
<reference key="1">
    <citation type="journal article" date="2003" name="J. Bacteriol.">
        <title>Comparative analyses of the complete genome sequences of Pierce's disease and citrus variegated chlorosis strains of Xylella fastidiosa.</title>
        <authorList>
            <person name="Van Sluys M.A."/>
            <person name="de Oliveira M.C."/>
            <person name="Monteiro-Vitorello C.B."/>
            <person name="Miyaki C.Y."/>
            <person name="Furlan L.R."/>
            <person name="Camargo L.E.A."/>
            <person name="da Silva A.C.R."/>
            <person name="Moon D.H."/>
            <person name="Takita M.A."/>
            <person name="Lemos E.G.M."/>
            <person name="Machado M.A."/>
            <person name="Ferro M.I.T."/>
            <person name="da Silva F.R."/>
            <person name="Goldman M.H.S."/>
            <person name="Goldman G.H."/>
            <person name="Lemos M.V.F."/>
            <person name="El-Dorry H."/>
            <person name="Tsai S.M."/>
            <person name="Carrer H."/>
            <person name="Carraro D.M."/>
            <person name="de Oliveira R.C."/>
            <person name="Nunes L.R."/>
            <person name="Siqueira W.J."/>
            <person name="Coutinho L.L."/>
            <person name="Kimura E.T."/>
            <person name="Ferro E.S."/>
            <person name="Harakava R."/>
            <person name="Kuramae E.E."/>
            <person name="Marino C.L."/>
            <person name="Giglioti E."/>
            <person name="Abreu I.L."/>
            <person name="Alves L.M.C."/>
            <person name="do Amaral A.M."/>
            <person name="Baia G.S."/>
            <person name="Blanco S.R."/>
            <person name="Brito M.S."/>
            <person name="Cannavan F.S."/>
            <person name="Celestino A.V."/>
            <person name="da Cunha A.F."/>
            <person name="Fenille R.C."/>
            <person name="Ferro J.A."/>
            <person name="Formighieri E.F."/>
            <person name="Kishi L.T."/>
            <person name="Leoni S.G."/>
            <person name="Oliveira A.R."/>
            <person name="Rosa V.E. Jr."/>
            <person name="Sassaki F.T."/>
            <person name="Sena J.A.D."/>
            <person name="de Souza A.A."/>
            <person name="Truffi D."/>
            <person name="Tsukumo F."/>
            <person name="Yanai G.M."/>
            <person name="Zaros L.G."/>
            <person name="Civerolo E.L."/>
            <person name="Simpson A.J.G."/>
            <person name="Almeida N.F. Jr."/>
            <person name="Setubal J.C."/>
            <person name="Kitajima J.P."/>
        </authorList>
    </citation>
    <scope>NUCLEOTIDE SEQUENCE [LARGE SCALE GENOMIC DNA]</scope>
    <source>
        <strain>Temecula1 / ATCC 700964</strain>
    </source>
</reference>
<sequence length="363" mass="40524">MNTWFLNVVDPLHQWFLGFGDIGVVLWTVLKILMIAIPLIVSVAFYVVWERKLIGWMHVRHGPMYVGMGLFQAFADVFKLLFKEVLYPSKAHKAIFVIAPLLTLAPSFAAWAVVPFDTKLVLSNANVGLLYLLAMTSLGVYGIILAGWASNSKYAFLGAMRSAAQVVSYEIAMGFALVGVMIAAGSLNLSQIVMAQAGSSGFFDWFLIPLFPLFIVYWVSGVAETNRSPFDVVEGESEIVAGHMVEYSGSVFALFFLAEYANMILVSFLISIFFLGGWLSPIQGWVSGQVSPLIDWVWNGGWPWLLLKVLFFASAYIWFRASFPRYRYDQIMRLGWKVFIPLTIVWIAVTALMVFSGVIQKGV</sequence>
<dbReference type="EC" id="7.1.1.-" evidence="1"/>
<dbReference type="EMBL" id="AE009442">
    <property type="protein sequence ID" value="AAO28141.1"/>
    <property type="status" value="ALT_INIT"/>
    <property type="molecule type" value="Genomic_DNA"/>
</dbReference>
<dbReference type="RefSeq" id="WP_012382440.1">
    <property type="nucleotide sequence ID" value="NC_004556.1"/>
</dbReference>
<dbReference type="SMR" id="Q87EP8"/>
<dbReference type="KEGG" id="xft:PD_0255"/>
<dbReference type="HOGENOM" id="CLU_015134_0_1_6"/>
<dbReference type="Proteomes" id="UP000002516">
    <property type="component" value="Chromosome"/>
</dbReference>
<dbReference type="GO" id="GO:0005886">
    <property type="term" value="C:plasma membrane"/>
    <property type="evidence" value="ECO:0007669"/>
    <property type="project" value="UniProtKB-SubCell"/>
</dbReference>
<dbReference type="GO" id="GO:0003954">
    <property type="term" value="F:NADH dehydrogenase activity"/>
    <property type="evidence" value="ECO:0007669"/>
    <property type="project" value="TreeGrafter"/>
</dbReference>
<dbReference type="GO" id="GO:0016655">
    <property type="term" value="F:oxidoreductase activity, acting on NAD(P)H, quinone or similar compound as acceptor"/>
    <property type="evidence" value="ECO:0007669"/>
    <property type="project" value="UniProtKB-UniRule"/>
</dbReference>
<dbReference type="GO" id="GO:0048038">
    <property type="term" value="F:quinone binding"/>
    <property type="evidence" value="ECO:0007669"/>
    <property type="project" value="UniProtKB-KW"/>
</dbReference>
<dbReference type="GO" id="GO:0009060">
    <property type="term" value="P:aerobic respiration"/>
    <property type="evidence" value="ECO:0007669"/>
    <property type="project" value="TreeGrafter"/>
</dbReference>
<dbReference type="HAMAP" id="MF_01350">
    <property type="entry name" value="NDH1_NuoH"/>
    <property type="match status" value="1"/>
</dbReference>
<dbReference type="InterPro" id="IPR001694">
    <property type="entry name" value="NADH_UbQ_OxRdtase_su1/FPO"/>
</dbReference>
<dbReference type="InterPro" id="IPR018086">
    <property type="entry name" value="NADH_UbQ_OxRdtase_su1_CS"/>
</dbReference>
<dbReference type="NCBIfam" id="NF004741">
    <property type="entry name" value="PRK06076.1-2"/>
    <property type="match status" value="1"/>
</dbReference>
<dbReference type="NCBIfam" id="NF004742">
    <property type="entry name" value="PRK06076.1-3"/>
    <property type="match status" value="1"/>
</dbReference>
<dbReference type="PANTHER" id="PTHR11432">
    <property type="entry name" value="NADH DEHYDROGENASE SUBUNIT 1"/>
    <property type="match status" value="1"/>
</dbReference>
<dbReference type="PANTHER" id="PTHR11432:SF3">
    <property type="entry name" value="NADH-UBIQUINONE OXIDOREDUCTASE CHAIN 1"/>
    <property type="match status" value="1"/>
</dbReference>
<dbReference type="Pfam" id="PF00146">
    <property type="entry name" value="NADHdh"/>
    <property type="match status" value="1"/>
</dbReference>
<dbReference type="PROSITE" id="PS00668">
    <property type="entry name" value="COMPLEX1_ND1_2"/>
    <property type="match status" value="1"/>
</dbReference>
<name>NUOH_XYLFT</name>
<proteinExistence type="inferred from homology"/>